<dbReference type="EC" id="6.1.1.23" evidence="1"/>
<dbReference type="EMBL" id="BA000019">
    <property type="protein sequence ID" value="BAB74135.1"/>
    <property type="molecule type" value="Genomic_DNA"/>
</dbReference>
<dbReference type="PIR" id="AE2110">
    <property type="entry name" value="AE2110"/>
</dbReference>
<dbReference type="RefSeq" id="WP_010996592.1">
    <property type="nucleotide sequence ID" value="NZ_RSCN01000002.1"/>
</dbReference>
<dbReference type="SMR" id="Q8YUB6"/>
<dbReference type="STRING" id="103690.gene:10494466"/>
<dbReference type="KEGG" id="ana:all2436"/>
<dbReference type="eggNOG" id="COG0173">
    <property type="taxonomic scope" value="Bacteria"/>
</dbReference>
<dbReference type="OrthoDB" id="9802326at2"/>
<dbReference type="Proteomes" id="UP000002483">
    <property type="component" value="Chromosome"/>
</dbReference>
<dbReference type="GO" id="GO:0005737">
    <property type="term" value="C:cytoplasm"/>
    <property type="evidence" value="ECO:0007669"/>
    <property type="project" value="UniProtKB-SubCell"/>
</dbReference>
<dbReference type="GO" id="GO:0004815">
    <property type="term" value="F:aspartate-tRNA ligase activity"/>
    <property type="evidence" value="ECO:0007669"/>
    <property type="project" value="UniProtKB-UniRule"/>
</dbReference>
<dbReference type="GO" id="GO:0050560">
    <property type="term" value="F:aspartate-tRNA(Asn) ligase activity"/>
    <property type="evidence" value="ECO:0007669"/>
    <property type="project" value="UniProtKB-EC"/>
</dbReference>
<dbReference type="GO" id="GO:0005524">
    <property type="term" value="F:ATP binding"/>
    <property type="evidence" value="ECO:0007669"/>
    <property type="project" value="UniProtKB-UniRule"/>
</dbReference>
<dbReference type="GO" id="GO:0003676">
    <property type="term" value="F:nucleic acid binding"/>
    <property type="evidence" value="ECO:0007669"/>
    <property type="project" value="InterPro"/>
</dbReference>
<dbReference type="GO" id="GO:0006422">
    <property type="term" value="P:aspartyl-tRNA aminoacylation"/>
    <property type="evidence" value="ECO:0007669"/>
    <property type="project" value="UniProtKB-UniRule"/>
</dbReference>
<dbReference type="CDD" id="cd00777">
    <property type="entry name" value="AspRS_core"/>
    <property type="match status" value="1"/>
</dbReference>
<dbReference type="CDD" id="cd04317">
    <property type="entry name" value="EcAspRS_like_N"/>
    <property type="match status" value="1"/>
</dbReference>
<dbReference type="Gene3D" id="3.30.930.10">
    <property type="entry name" value="Bira Bifunctional Protein, Domain 2"/>
    <property type="match status" value="1"/>
</dbReference>
<dbReference type="Gene3D" id="3.30.1360.30">
    <property type="entry name" value="GAD-like domain"/>
    <property type="match status" value="1"/>
</dbReference>
<dbReference type="Gene3D" id="2.40.50.140">
    <property type="entry name" value="Nucleic acid-binding proteins"/>
    <property type="match status" value="1"/>
</dbReference>
<dbReference type="HAMAP" id="MF_00044">
    <property type="entry name" value="Asp_tRNA_synth_type1"/>
    <property type="match status" value="1"/>
</dbReference>
<dbReference type="InterPro" id="IPR004364">
    <property type="entry name" value="Aa-tRNA-synt_II"/>
</dbReference>
<dbReference type="InterPro" id="IPR006195">
    <property type="entry name" value="aa-tRNA-synth_II"/>
</dbReference>
<dbReference type="InterPro" id="IPR045864">
    <property type="entry name" value="aa-tRNA-synth_II/BPL/LPL"/>
</dbReference>
<dbReference type="InterPro" id="IPR004524">
    <property type="entry name" value="Asp-tRNA-ligase_1"/>
</dbReference>
<dbReference type="InterPro" id="IPR047089">
    <property type="entry name" value="Asp-tRNA-ligase_1_N"/>
</dbReference>
<dbReference type="InterPro" id="IPR002312">
    <property type="entry name" value="Asp/Asn-tRNA-synth_IIb"/>
</dbReference>
<dbReference type="InterPro" id="IPR047090">
    <property type="entry name" value="AspRS_core"/>
</dbReference>
<dbReference type="InterPro" id="IPR004115">
    <property type="entry name" value="GAD-like_sf"/>
</dbReference>
<dbReference type="InterPro" id="IPR029351">
    <property type="entry name" value="GAD_dom"/>
</dbReference>
<dbReference type="InterPro" id="IPR012340">
    <property type="entry name" value="NA-bd_OB-fold"/>
</dbReference>
<dbReference type="InterPro" id="IPR004365">
    <property type="entry name" value="NA-bd_OB_tRNA"/>
</dbReference>
<dbReference type="NCBIfam" id="TIGR00459">
    <property type="entry name" value="aspS_bact"/>
    <property type="match status" value="1"/>
</dbReference>
<dbReference type="NCBIfam" id="NF001750">
    <property type="entry name" value="PRK00476.1"/>
    <property type="match status" value="1"/>
</dbReference>
<dbReference type="PANTHER" id="PTHR22594:SF5">
    <property type="entry name" value="ASPARTATE--TRNA LIGASE, MITOCHONDRIAL"/>
    <property type="match status" value="1"/>
</dbReference>
<dbReference type="PANTHER" id="PTHR22594">
    <property type="entry name" value="ASPARTYL/LYSYL-TRNA SYNTHETASE"/>
    <property type="match status" value="1"/>
</dbReference>
<dbReference type="Pfam" id="PF02938">
    <property type="entry name" value="GAD"/>
    <property type="match status" value="1"/>
</dbReference>
<dbReference type="Pfam" id="PF00152">
    <property type="entry name" value="tRNA-synt_2"/>
    <property type="match status" value="1"/>
</dbReference>
<dbReference type="Pfam" id="PF01336">
    <property type="entry name" value="tRNA_anti-codon"/>
    <property type="match status" value="1"/>
</dbReference>
<dbReference type="PRINTS" id="PR01042">
    <property type="entry name" value="TRNASYNTHASP"/>
</dbReference>
<dbReference type="SUPFAM" id="SSF55681">
    <property type="entry name" value="Class II aaRS and biotin synthetases"/>
    <property type="match status" value="1"/>
</dbReference>
<dbReference type="SUPFAM" id="SSF55261">
    <property type="entry name" value="GAD domain-like"/>
    <property type="match status" value="1"/>
</dbReference>
<dbReference type="SUPFAM" id="SSF50249">
    <property type="entry name" value="Nucleic acid-binding proteins"/>
    <property type="match status" value="1"/>
</dbReference>
<dbReference type="PROSITE" id="PS50862">
    <property type="entry name" value="AA_TRNA_LIGASE_II"/>
    <property type="match status" value="1"/>
</dbReference>
<feature type="chain" id="PRO_0000110817" description="Aspartate--tRNA(Asp/Asn) ligase">
    <location>
        <begin position="1"/>
        <end position="595"/>
    </location>
</feature>
<feature type="region of interest" description="Aspartate" evidence="1">
    <location>
        <begin position="202"/>
        <end position="205"/>
    </location>
</feature>
<feature type="binding site" evidence="1">
    <location>
        <position position="178"/>
    </location>
    <ligand>
        <name>L-aspartate</name>
        <dbReference type="ChEBI" id="CHEBI:29991"/>
    </ligand>
</feature>
<feature type="binding site" evidence="1">
    <location>
        <begin position="224"/>
        <end position="226"/>
    </location>
    <ligand>
        <name>ATP</name>
        <dbReference type="ChEBI" id="CHEBI:30616"/>
    </ligand>
</feature>
<feature type="binding site" evidence="1">
    <location>
        <position position="224"/>
    </location>
    <ligand>
        <name>L-aspartate</name>
        <dbReference type="ChEBI" id="CHEBI:29991"/>
    </ligand>
</feature>
<feature type="binding site" evidence="1">
    <location>
        <position position="233"/>
    </location>
    <ligand>
        <name>ATP</name>
        <dbReference type="ChEBI" id="CHEBI:30616"/>
    </ligand>
</feature>
<feature type="binding site" evidence="1">
    <location>
        <position position="458"/>
    </location>
    <ligand>
        <name>L-aspartate</name>
        <dbReference type="ChEBI" id="CHEBI:29991"/>
    </ligand>
</feature>
<feature type="binding site" evidence="1">
    <location>
        <position position="488"/>
    </location>
    <ligand>
        <name>ATP</name>
        <dbReference type="ChEBI" id="CHEBI:30616"/>
    </ligand>
</feature>
<feature type="binding site" evidence="1">
    <location>
        <position position="495"/>
    </location>
    <ligand>
        <name>L-aspartate</name>
        <dbReference type="ChEBI" id="CHEBI:29991"/>
    </ligand>
</feature>
<feature type="binding site" evidence="1">
    <location>
        <begin position="540"/>
        <end position="543"/>
    </location>
    <ligand>
        <name>ATP</name>
        <dbReference type="ChEBI" id="CHEBI:30616"/>
    </ligand>
</feature>
<feature type="site" description="Important for tRNA non-discrimination" evidence="1">
    <location>
        <position position="30"/>
    </location>
</feature>
<comment type="function">
    <text evidence="1">Aspartyl-tRNA synthetase with relaxed tRNA specificity since it is able to aspartylate not only its cognate tRNA(Asp) but also tRNA(Asn). Reaction proceeds in two steps: L-aspartate is first activated by ATP to form Asp-AMP and then transferred to the acceptor end of tRNA(Asp/Asn).</text>
</comment>
<comment type="catalytic activity">
    <reaction evidence="1">
        <text>tRNA(Asx) + L-aspartate + ATP = L-aspartyl-tRNA(Asx) + AMP + diphosphate</text>
        <dbReference type="Rhea" id="RHEA:18349"/>
        <dbReference type="Rhea" id="RHEA-COMP:9710"/>
        <dbReference type="Rhea" id="RHEA-COMP:9711"/>
        <dbReference type="ChEBI" id="CHEBI:29991"/>
        <dbReference type="ChEBI" id="CHEBI:30616"/>
        <dbReference type="ChEBI" id="CHEBI:33019"/>
        <dbReference type="ChEBI" id="CHEBI:78442"/>
        <dbReference type="ChEBI" id="CHEBI:78516"/>
        <dbReference type="ChEBI" id="CHEBI:456215"/>
        <dbReference type="EC" id="6.1.1.23"/>
    </reaction>
</comment>
<comment type="subunit">
    <text evidence="1">Homodimer.</text>
</comment>
<comment type="subcellular location">
    <subcellularLocation>
        <location evidence="1">Cytoplasm</location>
    </subcellularLocation>
</comment>
<comment type="similarity">
    <text evidence="1">Belongs to the class-II aminoacyl-tRNA synthetase family. Type 1 subfamily.</text>
</comment>
<protein>
    <recommendedName>
        <fullName evidence="1">Aspartate--tRNA(Asp/Asn) ligase</fullName>
        <ecNumber evidence="1">6.1.1.23</ecNumber>
    </recommendedName>
    <alternativeName>
        <fullName evidence="1">Aspartyl-tRNA synthetase</fullName>
        <shortName evidence="1">AspRS</shortName>
    </alternativeName>
    <alternativeName>
        <fullName evidence="1">Non-discriminating aspartyl-tRNA synthetase</fullName>
        <shortName evidence="1">ND-AspRS</shortName>
    </alternativeName>
</protein>
<keyword id="KW-0030">Aminoacyl-tRNA synthetase</keyword>
<keyword id="KW-0067">ATP-binding</keyword>
<keyword id="KW-0963">Cytoplasm</keyword>
<keyword id="KW-0436">Ligase</keyword>
<keyword id="KW-0547">Nucleotide-binding</keyword>
<keyword id="KW-0648">Protein biosynthesis</keyword>
<keyword id="KW-1185">Reference proteome</keyword>
<accession>Q8YUB6</accession>
<proteinExistence type="inferred from homology"/>
<sequence length="595" mass="67905">MRTHYCGELRQKDIGETVTLYGWVDRRRDHGGVIFLDLRDRSGIVQVVSDPQRTPDSYELANSLRNEYVVEITGRVTQRPEESLNTRIPTGEVEIYADKIELLNGVRKQLPFQVSTADTETVREDLRLKYRYLDLRRDRMARNIQLRHQVVKAMRRYLEDVEGFIEVETPILTRSTPEGARDYVLPSRVNPGEWFALPQSPQLFKQILMVSGLDRYYQIARCFRDEDLRADRQPEFTQLDMEMSFMSEEEIIELNEKLVSYIFKTVKGVELPLPFPRLTYAEAMERYGCDKPDTRYDLQLVNVSDVMKDSGFKVFRDAVANGGIVKILPIPNGNEQISNVRIKPGGDLFREASEAGAKGLAYIRVREDGEIDTIGAIKDNLSEEQKQEILQRTGAKPGHLLLFGAGDAVTVNKTLDRLRQAIAKEFGLIDPDKINLLWVVDFPMFEWNADEKRLEALHHPFTAPHPDDLHDLKTARAQAYDLVFNGFEVGGGSRRIYQREVQEQVFETIGLSPEEAQNKFGFLLEAFEYGTPPHGGIAYGLDRLVMLFAGEESIRDVIAFPKTQQARCLLTDAPSGVDVKQLKELHVASTYKPKS</sequence>
<evidence type="ECO:0000255" key="1">
    <source>
        <dbReference type="HAMAP-Rule" id="MF_00044"/>
    </source>
</evidence>
<gene>
    <name evidence="1" type="primary">aspS</name>
    <name type="ordered locus">all2436</name>
</gene>
<organism>
    <name type="scientific">Nostoc sp. (strain PCC 7120 / SAG 25.82 / UTEX 2576)</name>
    <dbReference type="NCBI Taxonomy" id="103690"/>
    <lineage>
        <taxon>Bacteria</taxon>
        <taxon>Bacillati</taxon>
        <taxon>Cyanobacteriota</taxon>
        <taxon>Cyanophyceae</taxon>
        <taxon>Nostocales</taxon>
        <taxon>Nostocaceae</taxon>
        <taxon>Nostoc</taxon>
    </lineage>
</organism>
<reference key="1">
    <citation type="journal article" date="2001" name="DNA Res.">
        <title>Complete genomic sequence of the filamentous nitrogen-fixing cyanobacterium Anabaena sp. strain PCC 7120.</title>
        <authorList>
            <person name="Kaneko T."/>
            <person name="Nakamura Y."/>
            <person name="Wolk C.P."/>
            <person name="Kuritz T."/>
            <person name="Sasamoto S."/>
            <person name="Watanabe A."/>
            <person name="Iriguchi M."/>
            <person name="Ishikawa A."/>
            <person name="Kawashima K."/>
            <person name="Kimura T."/>
            <person name="Kishida Y."/>
            <person name="Kohara M."/>
            <person name="Matsumoto M."/>
            <person name="Matsuno A."/>
            <person name="Muraki A."/>
            <person name="Nakazaki N."/>
            <person name="Shimpo S."/>
            <person name="Sugimoto M."/>
            <person name="Takazawa M."/>
            <person name="Yamada M."/>
            <person name="Yasuda M."/>
            <person name="Tabata S."/>
        </authorList>
    </citation>
    <scope>NUCLEOTIDE SEQUENCE [LARGE SCALE GENOMIC DNA]</scope>
    <source>
        <strain>PCC 7120 / SAG 25.82 / UTEX 2576</strain>
    </source>
</reference>
<name>SYDND_NOSS1</name>